<comment type="function">
    <text evidence="2">Cofactor for serine ADP-ribosylation that confers serine specificity on PARP1 and PARP2 and plays a key role in DNA damage response. Initiates the repair of double-strand DNA breaks: recruited to DNA damage sites by PARP1 and PARP2 and switches the amino acid specificity of PARP1 and PARP2 from aspartate or glutamate to serine residues, licensing serine ADP-ribosylation of target proteins. Serine ADP-ribosylation of target proteins, such as histones, promotes decompaction of chromatin and the recruitment of repair factors leading to the reparation of DNA strand breaks. Serine ADP-ribosylation of proteins constitutes the primary form of ADP-ribosylation of proteins in response to DNA damage. HPF1 acts by completing the active site of PARP1 and PARP2: forms a composite active site composed of residues from HPF1 and PARP1 or PARP2. While HPF1 promotes the initiation of serine ADP-ribosylation, it restricts the polymerase activity of PARP1 and PARP2 in order to limit the length of poly-ADP-ribose chains. HPF1 also promotes tyrosine ADP-ribosylation, probably by conferring tyrosine specificity on PARP1.</text>
</comment>
<comment type="subunit">
    <text evidence="2">Interacts with PARP1 (via the PARP catalytic domain). Interacts with PARP2 (via the PARP catalytic domain). Interacts with core nucleosomes in a PARP1- and PARP2-dependent manner.</text>
</comment>
<comment type="subcellular location">
    <subcellularLocation>
        <location evidence="2">Chromosome</location>
    </subcellularLocation>
    <subcellularLocation>
        <location evidence="2">Nucleus</location>
    </subcellularLocation>
    <text evidence="2">Localizes to DNA damage sites; chromatin localization is dependent on PARP1 and PARP2.</text>
</comment>
<comment type="similarity">
    <text evidence="4">Belongs to the HPF1 family.</text>
</comment>
<organism>
    <name type="scientific">Bos taurus</name>
    <name type="common">Bovine</name>
    <dbReference type="NCBI Taxonomy" id="9913"/>
    <lineage>
        <taxon>Eukaryota</taxon>
        <taxon>Metazoa</taxon>
        <taxon>Chordata</taxon>
        <taxon>Craniata</taxon>
        <taxon>Vertebrata</taxon>
        <taxon>Euteleostomi</taxon>
        <taxon>Mammalia</taxon>
        <taxon>Eutheria</taxon>
        <taxon>Laurasiatheria</taxon>
        <taxon>Artiodactyla</taxon>
        <taxon>Ruminantia</taxon>
        <taxon>Pecora</taxon>
        <taxon>Bovidae</taxon>
        <taxon>Bovinae</taxon>
        <taxon>Bos</taxon>
    </lineage>
</organism>
<evidence type="ECO:0000250" key="1">
    <source>
        <dbReference type="UniProtKB" id="Q8CFE2"/>
    </source>
</evidence>
<evidence type="ECO:0000250" key="2">
    <source>
        <dbReference type="UniProtKB" id="Q9NWY4"/>
    </source>
</evidence>
<evidence type="ECO:0000256" key="3">
    <source>
        <dbReference type="SAM" id="MobiDB-lite"/>
    </source>
</evidence>
<evidence type="ECO:0000305" key="4"/>
<proteinExistence type="evidence at transcript level"/>
<feature type="chain" id="PRO_0000294445" description="Histone PARylation factor 1">
    <location>
        <begin position="1"/>
        <end position="346"/>
    </location>
</feature>
<feature type="region of interest" description="Disordered" evidence="3">
    <location>
        <begin position="1"/>
        <end position="29"/>
    </location>
</feature>
<feature type="region of interest" description="Interaction with PARP1" evidence="2">
    <location>
        <begin position="242"/>
        <end position="346"/>
    </location>
</feature>
<feature type="compositionally biased region" description="Basic residues" evidence="3">
    <location>
        <begin position="1"/>
        <end position="10"/>
    </location>
</feature>
<feature type="compositionally biased region" description="Basic and acidic residues" evidence="3">
    <location>
        <begin position="19"/>
        <end position="29"/>
    </location>
</feature>
<feature type="active site" description="Proton donor" evidence="2">
    <location>
        <position position="284"/>
    </location>
</feature>
<feature type="modified residue" description="N-acetylmethionine" evidence="2">
    <location>
        <position position="1"/>
    </location>
</feature>
<feature type="modified residue" description="N6-acetyllysine" evidence="1">
    <location>
        <position position="19"/>
    </location>
</feature>
<feature type="modified residue" description="ADP-ribosylserine" evidence="2">
    <location>
        <position position="97"/>
    </location>
</feature>
<feature type="modified residue" description="N6-acetyllysine" evidence="2">
    <location>
        <position position="186"/>
    </location>
</feature>
<feature type="modified residue" description="N6-acetyllysine" evidence="2">
    <location>
        <position position="233"/>
    </location>
</feature>
<feature type="modified residue" description="PolyADP-ribosyl aspartic acid" evidence="2">
    <location>
        <position position="235"/>
    </location>
</feature>
<feature type="modified residue" description="ADP-ribosyltyrosine" evidence="2">
    <location>
        <position position="238"/>
    </location>
</feature>
<feature type="modified residue" description="PolyADP-ribosyl glutamic acid" evidence="2">
    <location>
        <position position="240"/>
    </location>
</feature>
<reference key="1">
    <citation type="submission" date="2007-02" db="EMBL/GenBank/DDBJ databases">
        <authorList>
            <consortium name="NIH - Mammalian Gene Collection (MGC) project"/>
        </authorList>
    </citation>
    <scope>NUCLEOTIDE SEQUENCE [LARGE SCALE MRNA]</scope>
    <source>
        <strain>Hereford</strain>
        <tissue>Fetal lung</tissue>
    </source>
</reference>
<sequence length="346" mass="39091">MVGGGAKRRLRGEGPQCEKPVDMKKSKSCEADVPGDLRKEVESHYRLPLPEDFYHFWRFCEGLDPEQPADSLSASLGLRLVGPYDILAGKHKIKKKSASLNFNLHWRFYYDPPEFQTIIIGDSKTQFHMGYFRDSPDELPVFVGTNEAKKNCIIVQSGDNVFAAVKLFLMKKLKEVTDKKKSSLLKTIDEKLTEAARELGFSLEQRTVRMKQRDKKVVTKTFHGAGLVVPVDKNDVGYRELPETDASLRRICGTIVEAPSDADRLQAFAPVQEMMTYVQFANDECDYGMGLELGLDLFCHGSHYFHKVAGQLLPLAYNLLKRNLFAEIIEAHLANRSQDDVDQLAA</sequence>
<keyword id="KW-0007">Acetylation</keyword>
<keyword id="KW-0013">ADP-ribosylation</keyword>
<keyword id="KW-0158">Chromosome</keyword>
<keyword id="KW-0227">DNA damage</keyword>
<keyword id="KW-0234">DNA repair</keyword>
<keyword id="KW-0539">Nucleus</keyword>
<keyword id="KW-1185">Reference proteome</keyword>
<accession>A2VDY4</accession>
<dbReference type="EMBL" id="BC133472">
    <property type="protein sequence ID" value="AAI33473.1"/>
    <property type="molecule type" value="mRNA"/>
</dbReference>
<dbReference type="RefSeq" id="NP_001075062.1">
    <property type="nucleotide sequence ID" value="NM_001081593.1"/>
</dbReference>
<dbReference type="SMR" id="A2VDY4"/>
<dbReference type="FunCoup" id="A2VDY4">
    <property type="interactions" value="3242"/>
</dbReference>
<dbReference type="STRING" id="9913.ENSBTAP00000026815"/>
<dbReference type="PaxDb" id="9913-ENSBTAP00000026815"/>
<dbReference type="GeneID" id="525698"/>
<dbReference type="KEGG" id="bta:525698"/>
<dbReference type="CTD" id="54969"/>
<dbReference type="VEuPathDB" id="HostDB:ENSBTAG00000020132"/>
<dbReference type="eggNOG" id="KOG3952">
    <property type="taxonomic scope" value="Eukaryota"/>
</dbReference>
<dbReference type="HOGENOM" id="CLU_053037_0_0_1"/>
<dbReference type="InParanoid" id="A2VDY4"/>
<dbReference type="OMA" id="HKELHML"/>
<dbReference type="OrthoDB" id="416496at2759"/>
<dbReference type="TreeFam" id="TF317026"/>
<dbReference type="Proteomes" id="UP000009136">
    <property type="component" value="Chromosome 8"/>
</dbReference>
<dbReference type="Bgee" id="ENSBTAG00000020132">
    <property type="expression patterns" value="Expressed in oocyte and 107 other cell types or tissues"/>
</dbReference>
<dbReference type="GO" id="GO:0000785">
    <property type="term" value="C:chromatin"/>
    <property type="evidence" value="ECO:0000250"/>
    <property type="project" value="UniProtKB"/>
</dbReference>
<dbReference type="GO" id="GO:0005634">
    <property type="term" value="C:nucleus"/>
    <property type="evidence" value="ECO:0000250"/>
    <property type="project" value="UniProtKB"/>
</dbReference>
<dbReference type="GO" id="GO:0090734">
    <property type="term" value="C:site of DNA damage"/>
    <property type="evidence" value="ECO:0000250"/>
    <property type="project" value="UniProtKB"/>
</dbReference>
<dbReference type="GO" id="GO:0003682">
    <property type="term" value="F:chromatin binding"/>
    <property type="evidence" value="ECO:0000250"/>
    <property type="project" value="UniProtKB"/>
</dbReference>
<dbReference type="GO" id="GO:0042393">
    <property type="term" value="F:histone binding"/>
    <property type="evidence" value="ECO:0000318"/>
    <property type="project" value="GO_Central"/>
</dbReference>
<dbReference type="GO" id="GO:0072572">
    <property type="term" value="F:poly-ADP-D-ribose binding"/>
    <property type="evidence" value="ECO:0000318"/>
    <property type="project" value="GO_Central"/>
</dbReference>
<dbReference type="GO" id="GO:0140768">
    <property type="term" value="F:protein ADP-ribosyltransferase-substrate adaptor activity"/>
    <property type="evidence" value="ECO:0000250"/>
    <property type="project" value="UniProtKB"/>
</dbReference>
<dbReference type="GO" id="GO:0006974">
    <property type="term" value="P:DNA damage response"/>
    <property type="evidence" value="ECO:0000250"/>
    <property type="project" value="UniProtKB"/>
</dbReference>
<dbReference type="GO" id="GO:0140861">
    <property type="term" value="P:DNA repair-dependent chromatin remodeling"/>
    <property type="evidence" value="ECO:0000250"/>
    <property type="project" value="UniProtKB"/>
</dbReference>
<dbReference type="GO" id="GO:0006302">
    <property type="term" value="P:double-strand break repair"/>
    <property type="evidence" value="ECO:0000318"/>
    <property type="project" value="GO_Central"/>
</dbReference>
<dbReference type="InterPro" id="IPR019361">
    <property type="entry name" value="HPF1"/>
</dbReference>
<dbReference type="PANTHER" id="PTHR13386">
    <property type="entry name" value="HISTONE PARYLATION FACTOR 1"/>
    <property type="match status" value="1"/>
</dbReference>
<dbReference type="PANTHER" id="PTHR13386:SF1">
    <property type="entry name" value="HISTONE PARYLATION FACTOR 1"/>
    <property type="match status" value="1"/>
</dbReference>
<dbReference type="Pfam" id="PF10228">
    <property type="entry name" value="HPF1"/>
    <property type="match status" value="1"/>
</dbReference>
<protein>
    <recommendedName>
        <fullName evidence="4">Histone PARylation factor 1</fullName>
    </recommendedName>
</protein>
<name>HPF1_BOVIN</name>
<gene>
    <name evidence="2" type="primary">HPF1</name>
</gene>